<reference key="1">
    <citation type="journal article" date="2013" name="Nature">
        <title>The zebrafish reference genome sequence and its relationship to the human genome.</title>
        <authorList>
            <person name="Howe K."/>
            <person name="Clark M.D."/>
            <person name="Torroja C.F."/>
            <person name="Torrance J."/>
            <person name="Berthelot C."/>
            <person name="Muffato M."/>
            <person name="Collins J.E."/>
            <person name="Humphray S."/>
            <person name="McLaren K."/>
            <person name="Matthews L."/>
            <person name="McLaren S."/>
            <person name="Sealy I."/>
            <person name="Caccamo M."/>
            <person name="Churcher C."/>
            <person name="Scott C."/>
            <person name="Barrett J.C."/>
            <person name="Koch R."/>
            <person name="Rauch G.J."/>
            <person name="White S."/>
            <person name="Chow W."/>
            <person name="Kilian B."/>
            <person name="Quintais L.T."/>
            <person name="Guerra-Assuncao J.A."/>
            <person name="Zhou Y."/>
            <person name="Gu Y."/>
            <person name="Yen J."/>
            <person name="Vogel J.H."/>
            <person name="Eyre T."/>
            <person name="Redmond S."/>
            <person name="Banerjee R."/>
            <person name="Chi J."/>
            <person name="Fu B."/>
            <person name="Langley E."/>
            <person name="Maguire S.F."/>
            <person name="Laird G.K."/>
            <person name="Lloyd D."/>
            <person name="Kenyon E."/>
            <person name="Donaldson S."/>
            <person name="Sehra H."/>
            <person name="Almeida-King J."/>
            <person name="Loveland J."/>
            <person name="Trevanion S."/>
            <person name="Jones M."/>
            <person name="Quail M."/>
            <person name="Willey D."/>
            <person name="Hunt A."/>
            <person name="Burton J."/>
            <person name="Sims S."/>
            <person name="McLay K."/>
            <person name="Plumb B."/>
            <person name="Davis J."/>
            <person name="Clee C."/>
            <person name="Oliver K."/>
            <person name="Clark R."/>
            <person name="Riddle C."/>
            <person name="Elliot D."/>
            <person name="Threadgold G."/>
            <person name="Harden G."/>
            <person name="Ware D."/>
            <person name="Begum S."/>
            <person name="Mortimore B."/>
            <person name="Kerry G."/>
            <person name="Heath P."/>
            <person name="Phillimore B."/>
            <person name="Tracey A."/>
            <person name="Corby N."/>
            <person name="Dunn M."/>
            <person name="Johnson C."/>
            <person name="Wood J."/>
            <person name="Clark S."/>
            <person name="Pelan S."/>
            <person name="Griffiths G."/>
            <person name="Smith M."/>
            <person name="Glithero R."/>
            <person name="Howden P."/>
            <person name="Barker N."/>
            <person name="Lloyd C."/>
            <person name="Stevens C."/>
            <person name="Harley J."/>
            <person name="Holt K."/>
            <person name="Panagiotidis G."/>
            <person name="Lovell J."/>
            <person name="Beasley H."/>
            <person name="Henderson C."/>
            <person name="Gordon D."/>
            <person name="Auger K."/>
            <person name="Wright D."/>
            <person name="Collins J."/>
            <person name="Raisen C."/>
            <person name="Dyer L."/>
            <person name="Leung K."/>
            <person name="Robertson L."/>
            <person name="Ambridge K."/>
            <person name="Leongamornlert D."/>
            <person name="McGuire S."/>
            <person name="Gilderthorp R."/>
            <person name="Griffiths C."/>
            <person name="Manthravadi D."/>
            <person name="Nichol S."/>
            <person name="Barker G."/>
            <person name="Whitehead S."/>
            <person name="Kay M."/>
            <person name="Brown J."/>
            <person name="Murnane C."/>
            <person name="Gray E."/>
            <person name="Humphries M."/>
            <person name="Sycamore N."/>
            <person name="Barker D."/>
            <person name="Saunders D."/>
            <person name="Wallis J."/>
            <person name="Babbage A."/>
            <person name="Hammond S."/>
            <person name="Mashreghi-Mohammadi M."/>
            <person name="Barr L."/>
            <person name="Martin S."/>
            <person name="Wray P."/>
            <person name="Ellington A."/>
            <person name="Matthews N."/>
            <person name="Ellwood M."/>
            <person name="Woodmansey R."/>
            <person name="Clark G."/>
            <person name="Cooper J."/>
            <person name="Tromans A."/>
            <person name="Grafham D."/>
            <person name="Skuce C."/>
            <person name="Pandian R."/>
            <person name="Andrews R."/>
            <person name="Harrison E."/>
            <person name="Kimberley A."/>
            <person name="Garnett J."/>
            <person name="Fosker N."/>
            <person name="Hall R."/>
            <person name="Garner P."/>
            <person name="Kelly D."/>
            <person name="Bird C."/>
            <person name="Palmer S."/>
            <person name="Gehring I."/>
            <person name="Berger A."/>
            <person name="Dooley C.M."/>
            <person name="Ersan-Urun Z."/>
            <person name="Eser C."/>
            <person name="Geiger H."/>
            <person name="Geisler M."/>
            <person name="Karotki L."/>
            <person name="Kirn A."/>
            <person name="Konantz J."/>
            <person name="Konantz M."/>
            <person name="Oberlander M."/>
            <person name="Rudolph-Geiger S."/>
            <person name="Teucke M."/>
            <person name="Lanz C."/>
            <person name="Raddatz G."/>
            <person name="Osoegawa K."/>
            <person name="Zhu B."/>
            <person name="Rapp A."/>
            <person name="Widaa S."/>
            <person name="Langford C."/>
            <person name="Yang F."/>
            <person name="Schuster S.C."/>
            <person name="Carter N.P."/>
            <person name="Harrow J."/>
            <person name="Ning Z."/>
            <person name="Herrero J."/>
            <person name="Searle S.M."/>
            <person name="Enright A."/>
            <person name="Geisler R."/>
            <person name="Plasterk R.H."/>
            <person name="Lee C."/>
            <person name="Westerfield M."/>
            <person name="de Jong P.J."/>
            <person name="Zon L.I."/>
            <person name="Postlethwait J.H."/>
            <person name="Nusslein-Volhard C."/>
            <person name="Hubbard T.J."/>
            <person name="Roest Crollius H."/>
            <person name="Rogers J."/>
            <person name="Stemple D.L."/>
        </authorList>
    </citation>
    <scope>NUCLEOTIDE SEQUENCE [LARGE SCALE GENOMIC DNA]</scope>
    <source>
        <strain>Tuebingen</strain>
        <tissue>Embryo</tissue>
    </source>
</reference>
<reference key="2">
    <citation type="submission" date="2003-09" db="EMBL/GenBank/DDBJ databases">
        <authorList>
            <consortium name="NIH - Zebrafish Gene Collection (ZGC) project"/>
        </authorList>
    </citation>
    <scope>NUCLEOTIDE SEQUENCE [LARGE SCALE MRNA]</scope>
    <source>
        <tissue>Embryo</tissue>
    </source>
</reference>
<reference key="3">
    <citation type="journal article" date="2014" name="J. Genet. Genomics">
        <title>The E3 ubiquitin ligase gp78 protects against ER stress in zebrafish liver.</title>
        <authorList>
            <person name="Chen Z."/>
            <person name="Ballar P."/>
            <person name="Fu Y."/>
            <person name="Luo J."/>
            <person name="Du S."/>
            <person name="Fang S."/>
        </authorList>
    </citation>
    <scope>FUNCTION</scope>
    <scope>CATALYTIC ACTIVITY</scope>
    <scope>PATHWAY</scope>
    <scope>SUBCELLULAR LOCATION</scope>
    <scope>TISSUE SPECIFICITY</scope>
    <scope>DEVELOPMENTAL STAGE</scope>
</reference>
<reference key="4">
    <citation type="journal article" date="2023" name="Acta Neuropathol.">
        <title>AMFR dysfunction causes autosomal recessive spastic paraplegia in human that is amenable to statin treatment in a preclinical model.</title>
        <authorList>
            <person name="Deng R."/>
            <person name="Medico-Salsench E."/>
            <person name="Nikoncuk A."/>
            <person name="Ramakrishnan R."/>
            <person name="Lanko K."/>
            <person name="Kuehn N.A."/>
            <person name="van der Linde H.C."/>
            <person name="Lor-Zade S."/>
            <person name="Albuainain F."/>
            <person name="Shi Y."/>
            <person name="Yousefi S."/>
            <person name="Capo I."/>
            <person name="van den Herik E.M."/>
            <person name="van Slegtenhorst M."/>
            <person name="van Minkelen R."/>
            <person name="Geeven G."/>
            <person name="Mulder M.T."/>
            <person name="Ruijter G.J.G."/>
            <person name="Luetjohann D."/>
            <person name="Jacobs E.H."/>
            <person name="Houlden H."/>
            <person name="Pagnamenta A.T."/>
            <person name="Metcalfe K."/>
            <person name="Jackson A."/>
            <person name="Banka S."/>
            <person name="De Simone L."/>
            <person name="Schwaede A."/>
            <person name="Kuntz N."/>
            <person name="Palculict T.B."/>
            <person name="Abbas S."/>
            <person name="Umair M."/>
            <person name="AlMuhaizea M."/>
            <person name="Colak D."/>
            <person name="AlQudairy H."/>
            <person name="Alsagob M."/>
            <person name="Pereira C."/>
            <person name="Trunzo R."/>
            <person name="Karageorgou V."/>
            <person name="Bertoli-Avella A.M."/>
            <person name="Bauer P."/>
            <person name="Bouman A."/>
            <person name="Hoefsloot L.H."/>
            <person name="van Ham T.J."/>
            <person name="Issa M."/>
            <person name="Zaki M.S."/>
            <person name="Gleeson J.G."/>
            <person name="Willemsen R."/>
            <person name="Kaya N."/>
            <person name="Arold S.T."/>
            <person name="Maroofian R."/>
            <person name="Sanderson L.E."/>
            <person name="Barakat T.S."/>
        </authorList>
    </citation>
    <scope>FUNCTION</scope>
    <scope>DISRUPTION PHENOTYPE</scope>
</reference>
<organism>
    <name type="scientific">Danio rerio</name>
    <name type="common">Zebrafish</name>
    <name type="synonym">Brachydanio rerio</name>
    <dbReference type="NCBI Taxonomy" id="7955"/>
    <lineage>
        <taxon>Eukaryota</taxon>
        <taxon>Metazoa</taxon>
        <taxon>Chordata</taxon>
        <taxon>Craniata</taxon>
        <taxon>Vertebrata</taxon>
        <taxon>Euteleostomi</taxon>
        <taxon>Actinopterygii</taxon>
        <taxon>Neopterygii</taxon>
        <taxon>Teleostei</taxon>
        <taxon>Ostariophysi</taxon>
        <taxon>Cypriniformes</taxon>
        <taxon>Danionidae</taxon>
        <taxon>Danioninae</taxon>
        <taxon>Danio</taxon>
    </lineage>
</organism>
<protein>
    <recommendedName>
        <fullName>E3 ubiquitin-protein ligase AMFR</fullName>
        <ecNumber evidence="6">2.3.2.36</ecNumber>
    </recommendedName>
    <alternativeName>
        <fullName>Autocrine motility factor receptor</fullName>
        <shortName>AMF receptor</shortName>
    </alternativeName>
</protein>
<proteinExistence type="evidence at protein level"/>
<gene>
    <name evidence="8" type="primary">amfra</name>
    <name type="ORF">wu:fi06e06</name>
    <name type="ORF">wu:fi37e05</name>
    <name type="ORF">zgc:63893</name>
</gene>
<accession>F1QB30</accession>
<accession>A0A8M3AWU0</accession>
<accession>Q6PFU8</accession>
<comment type="function">
    <text evidence="6 7">E3 ubiquitin-protein ligase that mediates the polyubiquitination of lysine and cysteine residues on target proteins (PubMed:25064675). May participate in the final step of endoplasmic reticulum-associated degradation (ERAD) (PubMed:25064675). Required for proper lipid homeostasis (PubMed:37119330).</text>
</comment>
<comment type="catalytic activity">
    <reaction evidence="6">
        <text>[E2 ubiquitin-conjugating enzyme]-S-ubiquitinyl-L-cysteine + [acceptor protein]-L-cysteine = [E2 ubiquitin-conjugating enzyme]-L-cysteine + [acceptor protein]-S-ubiquitinyl-L-cysteine.</text>
        <dbReference type="EC" id="2.3.2.36"/>
    </reaction>
</comment>
<comment type="pathway">
    <text evidence="6">Protein modification; protein ubiquitination.</text>
</comment>
<comment type="subcellular location">
    <subcellularLocation>
        <location evidence="6">Endoplasmic reticulum membrane</location>
        <topology evidence="2">Multi-pass membrane protein</topology>
    </subcellularLocation>
    <text evidence="1">Palmitoylation promotes localization to the peripheral endoplasmic reticulum.</text>
</comment>
<comment type="tissue specificity">
    <text evidence="6">Widely expressed.</text>
</comment>
<comment type="developmental stage">
    <text evidence="6">Expressed in brain, eyes, gut, and pancreas at 4 an 5 dpf (days post fertilization) embryos.</text>
</comment>
<comment type="disruption phenotype">
    <text evidence="7">Knockdown embryos are small and display dysregulation of lipid homeostasis. They show increased lipid content, and increased cholesterol synthesis. They demonstrate impaired touch-evoked escape responses associated with decreased axonal branching.</text>
</comment>
<evidence type="ECO:0000250" key="1">
    <source>
        <dbReference type="UniProtKB" id="Q9UKV5"/>
    </source>
</evidence>
<evidence type="ECO:0000255" key="2"/>
<evidence type="ECO:0000255" key="3">
    <source>
        <dbReference type="PROSITE-ProRule" id="PRU00175"/>
    </source>
</evidence>
<evidence type="ECO:0000255" key="4">
    <source>
        <dbReference type="PROSITE-ProRule" id="PRU00468"/>
    </source>
</evidence>
<evidence type="ECO:0000256" key="5">
    <source>
        <dbReference type="SAM" id="MobiDB-lite"/>
    </source>
</evidence>
<evidence type="ECO:0000269" key="6">
    <source>
    </source>
</evidence>
<evidence type="ECO:0000269" key="7">
    <source>
    </source>
</evidence>
<evidence type="ECO:0000303" key="8">
    <source>
    </source>
</evidence>
<evidence type="ECO:0000305" key="9"/>
<keyword id="KW-0256">Endoplasmic reticulum</keyword>
<keyword id="KW-0472">Membrane</keyword>
<keyword id="KW-0479">Metal-binding</keyword>
<keyword id="KW-1185">Reference proteome</keyword>
<keyword id="KW-0808">Transferase</keyword>
<keyword id="KW-0812">Transmembrane</keyword>
<keyword id="KW-1133">Transmembrane helix</keyword>
<keyword id="KW-0862">Zinc</keyword>
<keyword id="KW-0863">Zinc-finger</keyword>
<feature type="chain" id="PRO_0000459685" description="E3 ubiquitin-protein ligase AMFR">
    <location>
        <begin position="1"/>
        <end position="620"/>
    </location>
</feature>
<feature type="transmembrane region" description="Helical" evidence="2">
    <location>
        <begin position="75"/>
        <end position="95"/>
    </location>
</feature>
<feature type="transmembrane region" description="Helical" evidence="2">
    <location>
        <begin position="115"/>
        <end position="135"/>
    </location>
</feature>
<feature type="transmembrane region" description="Helical" evidence="2">
    <location>
        <begin position="138"/>
        <end position="158"/>
    </location>
</feature>
<feature type="transmembrane region" description="Helical" evidence="2">
    <location>
        <begin position="179"/>
        <end position="199"/>
    </location>
</feature>
<feature type="transmembrane region" description="Helical" evidence="2">
    <location>
        <begin position="201"/>
        <end position="221"/>
    </location>
</feature>
<feature type="transmembrane region" description="Helical" evidence="2">
    <location>
        <begin position="247"/>
        <end position="267"/>
    </location>
</feature>
<feature type="transmembrane region" description="Helical" evidence="2">
    <location>
        <begin position="269"/>
        <end position="289"/>
    </location>
</feature>
<feature type="domain" description="CUE" evidence="4">
    <location>
        <begin position="449"/>
        <end position="491"/>
    </location>
</feature>
<feature type="zinc finger region" description="RING-type; atypical" evidence="3">
    <location>
        <begin position="334"/>
        <end position="372"/>
    </location>
</feature>
<feature type="region of interest" description="Disordered" evidence="5">
    <location>
        <begin position="510"/>
        <end position="544"/>
    </location>
</feature>
<feature type="region of interest" description="Disordered" evidence="5">
    <location>
        <begin position="569"/>
        <end position="598"/>
    </location>
</feature>
<feature type="compositionally biased region" description="Low complexity" evidence="5">
    <location>
        <begin position="510"/>
        <end position="526"/>
    </location>
</feature>
<feature type="compositionally biased region" description="Basic and acidic residues" evidence="5">
    <location>
        <begin position="531"/>
        <end position="544"/>
    </location>
</feature>
<feature type="compositionally biased region" description="Acidic residues" evidence="5">
    <location>
        <begin position="581"/>
        <end position="595"/>
    </location>
</feature>
<feature type="sequence conflict" description="In Ref. 2; AAH57411." evidence="9" ref="2">
    <original>T</original>
    <variation>S</variation>
    <location>
        <position position="503"/>
    </location>
</feature>
<dbReference type="EC" id="2.3.2.36" evidence="6"/>
<dbReference type="EMBL" id="CU855766">
    <property type="status" value="NOT_ANNOTATED_CDS"/>
    <property type="molecule type" value="Genomic_DNA"/>
</dbReference>
<dbReference type="EMBL" id="BC057411">
    <property type="protein sequence ID" value="AAH57411.1"/>
    <property type="molecule type" value="mRNA"/>
</dbReference>
<dbReference type="RefSeq" id="NP_998328.2">
    <property type="nucleotide sequence ID" value="NM_213163.2"/>
</dbReference>
<dbReference type="RefSeq" id="XP_009296486.1">
    <property type="nucleotide sequence ID" value="XM_009298211.2"/>
</dbReference>
<dbReference type="SMR" id="F1QB30"/>
<dbReference type="FunCoup" id="F1QB30">
    <property type="interactions" value="834"/>
</dbReference>
<dbReference type="STRING" id="7955.ENSDARP00000106624"/>
<dbReference type="PaxDb" id="7955-ENSDARP00000106624"/>
<dbReference type="Ensembl" id="ENSDART00000012944">
    <property type="protein sequence ID" value="ENSDARP00000002529"/>
    <property type="gene ID" value="ENSDARG00000020218"/>
</dbReference>
<dbReference type="Ensembl" id="ENSDART00000122559">
    <property type="protein sequence ID" value="ENSDARP00000106624"/>
    <property type="gene ID" value="ENSDARG00000020218"/>
</dbReference>
<dbReference type="GeneID" id="406442"/>
<dbReference type="KEGG" id="dre:406442"/>
<dbReference type="AGR" id="ZFIN:ZDB-GENE-040426-2190"/>
<dbReference type="CTD" id="406442"/>
<dbReference type="ZFIN" id="ZDB-GENE-040426-2190">
    <property type="gene designation" value="amfra"/>
</dbReference>
<dbReference type="eggNOG" id="KOG0802">
    <property type="taxonomic scope" value="Eukaryota"/>
</dbReference>
<dbReference type="HOGENOM" id="CLU_015061_0_0_1"/>
<dbReference type="OMA" id="EWKINAT"/>
<dbReference type="OrthoDB" id="3824970at2759"/>
<dbReference type="TreeFam" id="TF320052"/>
<dbReference type="Reactome" id="R-DRE-532668">
    <property type="pathway name" value="N-glycan trimming in the ER and Calnexin/Calreticulin cycle"/>
</dbReference>
<dbReference type="UniPathway" id="UPA00143"/>
<dbReference type="Proteomes" id="UP000000437">
    <property type="component" value="Chromosome 25"/>
</dbReference>
<dbReference type="Bgee" id="ENSDARG00000020218">
    <property type="expression patterns" value="Expressed in caudal fin and 26 other cell types or tissues"/>
</dbReference>
<dbReference type="GO" id="GO:0005829">
    <property type="term" value="C:cytosol"/>
    <property type="evidence" value="ECO:0000318"/>
    <property type="project" value="GO_Central"/>
</dbReference>
<dbReference type="GO" id="GO:0005783">
    <property type="term" value="C:endoplasmic reticulum"/>
    <property type="evidence" value="ECO:0000314"/>
    <property type="project" value="ZFIN"/>
</dbReference>
<dbReference type="GO" id="GO:0005789">
    <property type="term" value="C:endoplasmic reticulum membrane"/>
    <property type="evidence" value="ECO:0000314"/>
    <property type="project" value="UniProtKB"/>
</dbReference>
<dbReference type="GO" id="GO:0000151">
    <property type="term" value="C:ubiquitin ligase complex"/>
    <property type="evidence" value="ECO:0000318"/>
    <property type="project" value="GO_Central"/>
</dbReference>
<dbReference type="GO" id="GO:0043130">
    <property type="term" value="F:ubiquitin binding"/>
    <property type="evidence" value="ECO:0007669"/>
    <property type="project" value="InterPro"/>
</dbReference>
<dbReference type="GO" id="GO:0061630">
    <property type="term" value="F:ubiquitin protein ligase activity"/>
    <property type="evidence" value="ECO:0000314"/>
    <property type="project" value="ZFIN"/>
</dbReference>
<dbReference type="GO" id="GO:0008270">
    <property type="term" value="F:zinc ion binding"/>
    <property type="evidence" value="ECO:0007669"/>
    <property type="project" value="UniProtKB-KW"/>
</dbReference>
<dbReference type="GO" id="GO:0030968">
    <property type="term" value="P:endoplasmic reticulum unfolded protein response"/>
    <property type="evidence" value="ECO:0000318"/>
    <property type="project" value="GO_Central"/>
</dbReference>
<dbReference type="GO" id="GO:0070936">
    <property type="term" value="P:protein K48-linked ubiquitination"/>
    <property type="evidence" value="ECO:0000318"/>
    <property type="project" value="GO_Central"/>
</dbReference>
<dbReference type="GO" id="GO:0000209">
    <property type="term" value="P:protein polyubiquitination"/>
    <property type="evidence" value="ECO:0000314"/>
    <property type="project" value="ZFIN"/>
</dbReference>
<dbReference type="GO" id="GO:0034976">
    <property type="term" value="P:response to endoplasmic reticulum stress"/>
    <property type="evidence" value="ECO:0000315"/>
    <property type="project" value="ZFIN"/>
</dbReference>
<dbReference type="GO" id="GO:0006511">
    <property type="term" value="P:ubiquitin-dependent protein catabolic process"/>
    <property type="evidence" value="ECO:0000318"/>
    <property type="project" value="GO_Central"/>
</dbReference>
<dbReference type="CDD" id="cd14421">
    <property type="entry name" value="CUE_AMFR"/>
    <property type="match status" value="1"/>
</dbReference>
<dbReference type="CDD" id="cd16455">
    <property type="entry name" value="RING-H2_AMFR"/>
    <property type="match status" value="1"/>
</dbReference>
<dbReference type="FunFam" id="1.10.8.10:FF:000026">
    <property type="entry name" value="E3 ubiquitin-protein ligase AMFR"/>
    <property type="match status" value="1"/>
</dbReference>
<dbReference type="FunFam" id="3.30.40.10:FF:000149">
    <property type="entry name" value="E3 ubiquitin-protein ligase AMFR"/>
    <property type="match status" value="1"/>
</dbReference>
<dbReference type="Gene3D" id="1.10.8.10">
    <property type="entry name" value="DNA helicase RuvA subunit, C-terminal domain"/>
    <property type="match status" value="1"/>
</dbReference>
<dbReference type="Gene3D" id="3.30.40.10">
    <property type="entry name" value="Zinc/RING finger domain, C3HC4 (zinc finger)"/>
    <property type="match status" value="1"/>
</dbReference>
<dbReference type="InterPro" id="IPR040675">
    <property type="entry name" value="AMFR_Ube2g2-bd"/>
</dbReference>
<dbReference type="InterPro" id="IPR003892">
    <property type="entry name" value="CUE"/>
</dbReference>
<dbReference type="InterPro" id="IPR001841">
    <property type="entry name" value="Znf_RING"/>
</dbReference>
<dbReference type="InterPro" id="IPR013083">
    <property type="entry name" value="Znf_RING/FYVE/PHD"/>
</dbReference>
<dbReference type="PANTHER" id="PTHR15067:SF5">
    <property type="entry name" value="E3 UBIQUITIN-PROTEIN LIGASE AMFR"/>
    <property type="match status" value="1"/>
</dbReference>
<dbReference type="PANTHER" id="PTHR15067">
    <property type="entry name" value="E3 UBIQUITIN-PROTEIN LIGASE RNF8"/>
    <property type="match status" value="1"/>
</dbReference>
<dbReference type="Pfam" id="PF02845">
    <property type="entry name" value="CUE"/>
    <property type="match status" value="1"/>
</dbReference>
<dbReference type="Pfam" id="PF18442">
    <property type="entry name" value="G2BR"/>
    <property type="match status" value="1"/>
</dbReference>
<dbReference type="Pfam" id="PF13639">
    <property type="entry name" value="zf-RING_2"/>
    <property type="match status" value="1"/>
</dbReference>
<dbReference type="SMART" id="SM00546">
    <property type="entry name" value="CUE"/>
    <property type="match status" value="1"/>
</dbReference>
<dbReference type="SMART" id="SM00184">
    <property type="entry name" value="RING"/>
    <property type="match status" value="1"/>
</dbReference>
<dbReference type="SUPFAM" id="SSF57850">
    <property type="entry name" value="RING/U-box"/>
    <property type="match status" value="1"/>
</dbReference>
<dbReference type="PROSITE" id="PS51140">
    <property type="entry name" value="CUE"/>
    <property type="match status" value="1"/>
</dbReference>
<dbReference type="PROSITE" id="PS50089">
    <property type="entry name" value="ZF_RING_2"/>
    <property type="match status" value="1"/>
</dbReference>
<sequence>MPLLFLERFPWPSLQTYTALSALLLAGTVLSAYSTVRDSEFSSALSEGPQNEELKLENLGNVATGVLLHLITDSLFVWVMVNTACCILMLIGKVIQCIVFGPLRVSEKQHLKDKFWNFIFYKFIFIFGVLNVQRVEEVVLWCLWFSMLIFLHLMVQLCKDRFEYLSFSPTTPMSSHVRVLALLVSVLSCCGGLAVLCALAGHIHGMHTVAFMAAECLLVTVRTGHVIIRYSIHLWDLNHEGTWENKSSYIYYTDFIMELAILSLDLMHHIHMLLFGNIWLSMASLVIFMQLRHLFHEVQRRIRRHKNYLRVIDNMESRFAVATPEELAANNDDCAICWDSMTTARKLPCGHLFHNSCLRSWLEQDTSCPTCRMSLNIHEGRREREEGQREPLEDNMAAAGAADARAHINQHNHFFHFDGSRIASWLPSFSVEVMHTTNILGIAQANNSQLNGMAHQIQEMFPQVPYHLILQDLQLTRSVEVTTDNILEGRIQVPFPTQSTDRTPIQMNAASEDGAGASSGSEVAAPEAEDFEVRGSRFSKSADERQRMLMQRKEELLLRARRRYLHKKPEDGDAYSVLGADNDDSVPSIEDEDSDSVTLRRRRLAAAAERRILRQEPSPF</sequence>
<name>AMFR_DANRE</name>